<dbReference type="EMBL" id="AY159354">
    <property type="protein sequence ID" value="AAO22232.1"/>
    <property type="molecule type" value="mRNA"/>
</dbReference>
<dbReference type="SMR" id="Q86QT9"/>
<dbReference type="GO" id="GO:0005576">
    <property type="term" value="C:extracellular region"/>
    <property type="evidence" value="ECO:0007669"/>
    <property type="project" value="UniProtKB-SubCell"/>
</dbReference>
<dbReference type="GO" id="GO:0019870">
    <property type="term" value="F:potassium channel inhibitor activity"/>
    <property type="evidence" value="ECO:0007669"/>
    <property type="project" value="InterPro"/>
</dbReference>
<dbReference type="GO" id="GO:0090729">
    <property type="term" value="F:toxin activity"/>
    <property type="evidence" value="ECO:0007669"/>
    <property type="project" value="UniProtKB-KW"/>
</dbReference>
<dbReference type="Gene3D" id="3.30.30.10">
    <property type="entry name" value="Knottin, scorpion toxin-like"/>
    <property type="match status" value="1"/>
</dbReference>
<dbReference type="InterPro" id="IPR012622">
    <property type="entry name" value="Ergtoxin"/>
</dbReference>
<dbReference type="InterPro" id="IPR036574">
    <property type="entry name" value="Scorpion_toxin-like_sf"/>
</dbReference>
<dbReference type="Pfam" id="PF08086">
    <property type="entry name" value="Toxin_17"/>
    <property type="match status" value="1"/>
</dbReference>
<dbReference type="SUPFAM" id="SSF57095">
    <property type="entry name" value="Scorpion toxin-like"/>
    <property type="match status" value="1"/>
</dbReference>
<dbReference type="PROSITE" id="PS60026">
    <property type="entry name" value="ERGTX"/>
    <property type="match status" value="1"/>
</dbReference>
<reference key="1">
    <citation type="journal article" date="2002" name="FEBS Lett.">
        <title>A large number of novel Ergtoxin-like genes and ERG K+-channels blocking peptides from scorpions of the genus Centruroides.</title>
        <authorList>
            <person name="Corona M."/>
            <person name="Gurrola G.B."/>
            <person name="Merino E."/>
            <person name="Cassulini R.R."/>
            <person name="Valdez-Cruz N.A."/>
            <person name="Garcia B."/>
            <person name="Ramirez-Dominguez M.E."/>
            <person name="Coronas F.I."/>
            <person name="Zamudio F.Z."/>
            <person name="Wanke E."/>
            <person name="Possani L.D."/>
        </authorList>
    </citation>
    <scope>NUCLEOTIDE SEQUENCE [MRNA]</scope>
    <scope>NOMENCLATURE</scope>
    <source>
        <tissue>Venom gland</tissue>
    </source>
</reference>
<protein>
    <recommendedName>
        <fullName evidence="5">Potassium channel toxin gamma-KTx 4.4</fullName>
    </recommendedName>
    <alternativeName>
        <fullName evidence="6">CexErgTx3</fullName>
        <shortName evidence="5">CexErg3</shortName>
        <shortName evidence="5">ErgTx3</shortName>
    </alternativeName>
    <alternativeName>
        <fullName evidence="5">Ergtoxin-like protein</fullName>
    </alternativeName>
</protein>
<name>KGX44_CENEX</name>
<keyword id="KW-1015">Disulfide bond</keyword>
<keyword id="KW-0872">Ion channel impairing toxin</keyword>
<keyword id="KW-0960">Knottin</keyword>
<keyword id="KW-0528">Neurotoxin</keyword>
<keyword id="KW-0632">Potassium channel impairing toxin</keyword>
<keyword id="KW-0964">Secreted</keyword>
<keyword id="KW-0800">Toxin</keyword>
<keyword id="KW-1220">Voltage-gated potassium channel impairing toxin</keyword>
<sequence>DRDSCVDKSKCAKYGYYYQCDECCKKAGDRAGTCEYFKCKCNP</sequence>
<proteinExistence type="inferred from homology"/>
<comment type="function">
    <text evidence="2">Reversibly blocks Kv11/ERG potassium channels.</text>
</comment>
<comment type="subcellular location">
    <subcellularLocation>
        <location evidence="4">Secreted</location>
    </subcellularLocation>
</comment>
<comment type="tissue specificity">
    <text evidence="6">Expressed by the venom gland.</text>
</comment>
<comment type="domain">
    <text evidence="1">The presence of a 'disulfide through disulfide knot' structurally defines this protein as a knottin.</text>
</comment>
<comment type="domain">
    <text evidence="3">Has the CSalpha/beta fold, which comprises one or two short alpha helices connected to anti-parallel beta-sheets stabilized by three or four disulfide bonds.</text>
</comment>
<comment type="similarity">
    <text evidence="6">Belongs to the ergtoxin family. Gamma-KTx 4 subfamily.</text>
</comment>
<accession>Q86QT9</accession>
<feature type="chain" id="PRO_0000066862" description="Potassium channel toxin gamma-KTx 4.4">
    <location>
        <begin position="1"/>
        <end position="43"/>
    </location>
</feature>
<feature type="disulfide bond" evidence="3">
    <location>
        <begin position="5"/>
        <end position="23"/>
    </location>
</feature>
<feature type="disulfide bond" evidence="3">
    <location>
        <begin position="11"/>
        <end position="34"/>
    </location>
</feature>
<feature type="disulfide bond" evidence="3">
    <location>
        <begin position="20"/>
        <end position="39"/>
    </location>
</feature>
<feature type="disulfide bond" evidence="3">
    <location>
        <begin position="24"/>
        <end position="41"/>
    </location>
</feature>
<evidence type="ECO:0000250" key="1"/>
<evidence type="ECO:0000250" key="2">
    <source>
        <dbReference type="UniProtKB" id="P59940"/>
    </source>
</evidence>
<evidence type="ECO:0000250" key="3">
    <source>
        <dbReference type="UniProtKB" id="Q86QT3"/>
    </source>
</evidence>
<evidence type="ECO:0000250" key="4">
    <source>
        <dbReference type="UniProtKB" id="Q86QU9"/>
    </source>
</evidence>
<evidence type="ECO:0000303" key="5">
    <source>
    </source>
</evidence>
<evidence type="ECO:0000305" key="6"/>
<organism>
    <name type="scientific">Centruroides exilicauda</name>
    <name type="common">Bark scorpion</name>
    <name type="synonym">Buthus exilicauda</name>
    <dbReference type="NCBI Taxonomy" id="6879"/>
    <lineage>
        <taxon>Eukaryota</taxon>
        <taxon>Metazoa</taxon>
        <taxon>Ecdysozoa</taxon>
        <taxon>Arthropoda</taxon>
        <taxon>Chelicerata</taxon>
        <taxon>Arachnida</taxon>
        <taxon>Scorpiones</taxon>
        <taxon>Buthida</taxon>
        <taxon>Buthoidea</taxon>
        <taxon>Buthidae</taxon>
        <taxon>Centruroides</taxon>
    </lineage>
</organism>